<protein>
    <recommendedName>
        <fullName evidence="2">U-scoloptoxin(13)-Er1a</fullName>
        <shortName evidence="2">U-SLPTX(13)-Er1a</shortName>
    </recommendedName>
</protein>
<accession>P0DQA9</accession>
<keyword id="KW-1015">Disulfide bond</keyword>
<keyword id="KW-0964">Secreted</keyword>
<keyword id="KW-0732">Signal</keyword>
<keyword id="KW-0800">Toxin</keyword>
<proteinExistence type="inferred from homology"/>
<sequence length="78" mass="8413">MFPSWSTTFVLCMGLCSLMNGALAQYDEGASIEDFEFRSACTTANNVCERMADTCCPGLQCIGCNPLDPDDDGHCSCQ</sequence>
<feature type="signal peptide" evidence="1">
    <location>
        <begin position="1"/>
        <end position="24"/>
    </location>
</feature>
<feature type="chain" id="PRO_0000446782" description="U-scoloptoxin(13)-Er1a" evidence="3">
    <location>
        <begin position="25"/>
        <end position="78"/>
    </location>
</feature>
<organism>
    <name type="scientific">Ethmostigmus rubripes</name>
    <name type="common">Giant centipede</name>
    <dbReference type="NCBI Taxonomy" id="62613"/>
    <lineage>
        <taxon>Eukaryota</taxon>
        <taxon>Metazoa</taxon>
        <taxon>Ecdysozoa</taxon>
        <taxon>Arthropoda</taxon>
        <taxon>Myriapoda</taxon>
        <taxon>Chilopoda</taxon>
        <taxon>Pleurostigmophora</taxon>
        <taxon>Scolopendromorpha</taxon>
        <taxon>Scolopendridae</taxon>
        <taxon>Ethmostigmus</taxon>
    </lineage>
</organism>
<reference key="1">
    <citation type="journal article" date="2014" name="Mol. Biol. Evol.">
        <title>Clawing through evolution: toxin diversification and convergence in the ancient lineage Chilopoda (centipedes).</title>
        <authorList>
            <person name="Undheim E.A."/>
            <person name="Jones A."/>
            <person name="Clauser K.R."/>
            <person name="Holland J.W."/>
            <person name="Pineda S.S."/>
            <person name="King G.F."/>
            <person name="Fry B.G."/>
        </authorList>
    </citation>
    <scope>NUCLEOTIDE SEQUENCE [MRNA]</scope>
    <scope>NOMENCLATURE</scope>
    <source>
        <tissue>Venom gland</tissue>
    </source>
</reference>
<name>TXD1A_ETHRU</name>
<evidence type="ECO:0000255" key="1"/>
<evidence type="ECO:0000303" key="2">
    <source>
    </source>
</evidence>
<evidence type="ECO:0000305" key="3"/>
<evidence type="ECO:0000305" key="4">
    <source>
    </source>
</evidence>
<comment type="subcellular location">
    <subcellularLocation>
        <location evidence="4">Secreted</location>
    </subcellularLocation>
</comment>
<comment type="tissue specificity">
    <text evidence="4">Expressed by the venom gland.</text>
</comment>
<comment type="PTM">
    <text evidence="3">Contains 4 disulfide bonds.</text>
</comment>
<comment type="similarity">
    <text evidence="3">Belongs to the scoloptoxin-13 family.</text>
</comment>
<comment type="caution">
    <text evidence="4">All E.rubripes family members described in 'Undeheim et al., 2014' have not been imported into UniProtKB. Please, refer to this paper to access them.</text>
</comment>
<comment type="online information" name="National Center for Biotechnology Information (NCBI)">
    <link uri="https://www.ncbi.nlm.nih.gov/nuccore/GASI01000122"/>
</comment>
<dbReference type="SMR" id="P0DQA9"/>
<dbReference type="GO" id="GO:0005576">
    <property type="term" value="C:extracellular region"/>
    <property type="evidence" value="ECO:0007669"/>
    <property type="project" value="UniProtKB-SubCell"/>
</dbReference>
<dbReference type="GO" id="GO:0090729">
    <property type="term" value="F:toxin activity"/>
    <property type="evidence" value="ECO:0007669"/>
    <property type="project" value="UniProtKB-KW"/>
</dbReference>